<organism>
    <name type="scientific">Gallus gallus</name>
    <name type="common">Chicken</name>
    <dbReference type="NCBI Taxonomy" id="9031"/>
    <lineage>
        <taxon>Eukaryota</taxon>
        <taxon>Metazoa</taxon>
        <taxon>Chordata</taxon>
        <taxon>Craniata</taxon>
        <taxon>Vertebrata</taxon>
        <taxon>Euteleostomi</taxon>
        <taxon>Archelosauria</taxon>
        <taxon>Archosauria</taxon>
        <taxon>Dinosauria</taxon>
        <taxon>Saurischia</taxon>
        <taxon>Theropoda</taxon>
        <taxon>Coelurosauria</taxon>
        <taxon>Aves</taxon>
        <taxon>Neognathae</taxon>
        <taxon>Galloanserae</taxon>
        <taxon>Galliformes</taxon>
        <taxon>Phasianidae</taxon>
        <taxon>Phasianinae</taxon>
        <taxon>Gallus</taxon>
    </lineage>
</organism>
<dbReference type="EC" id="2.3.2.13" evidence="3"/>
<dbReference type="EC" id="3.4.-.-" evidence="3"/>
<dbReference type="EC" id="3.5.1.44" evidence="3"/>
<dbReference type="EC" id="2.3.1.-" evidence="3 2"/>
<dbReference type="EMBL" id="L02270">
    <property type="protein sequence ID" value="AAA49104.1"/>
    <property type="status" value="ALT_INIT"/>
    <property type="molecule type" value="mRNA"/>
</dbReference>
<dbReference type="PIR" id="A47203">
    <property type="entry name" value="A47203"/>
</dbReference>
<dbReference type="RefSeq" id="NP_990779.1">
    <property type="nucleotide sequence ID" value="NM_205448.1"/>
</dbReference>
<dbReference type="SMR" id="Q01841"/>
<dbReference type="FunCoup" id="Q01841">
    <property type="interactions" value="2118"/>
</dbReference>
<dbReference type="STRING" id="9031.ENSGALP00000038435"/>
<dbReference type="GlyGen" id="Q01841">
    <property type="glycosylation" value="1 site"/>
</dbReference>
<dbReference type="PaxDb" id="9031-ENSGALP00000038435"/>
<dbReference type="KEGG" id="gga:396432"/>
<dbReference type="VEuPathDB" id="HostDB:geneid_396432"/>
<dbReference type="eggNOG" id="ENOG502QUSX">
    <property type="taxonomic scope" value="Eukaryota"/>
</dbReference>
<dbReference type="InParanoid" id="Q01841"/>
<dbReference type="OrthoDB" id="437511at2759"/>
<dbReference type="PhylomeDB" id="Q01841"/>
<dbReference type="PRO" id="PR:Q01841"/>
<dbReference type="Proteomes" id="UP000000539">
    <property type="component" value="Unassembled WGS sequence"/>
</dbReference>
<dbReference type="GO" id="GO:0000785">
    <property type="term" value="C:chromatin"/>
    <property type="evidence" value="ECO:0000250"/>
    <property type="project" value="UniProtKB"/>
</dbReference>
<dbReference type="GO" id="GO:0005829">
    <property type="term" value="C:cytosol"/>
    <property type="evidence" value="ECO:0000250"/>
    <property type="project" value="UniProtKB"/>
</dbReference>
<dbReference type="GO" id="GO:0005576">
    <property type="term" value="C:extracellular region"/>
    <property type="evidence" value="ECO:0007669"/>
    <property type="project" value="UniProtKB-KW"/>
</dbReference>
<dbReference type="GO" id="GO:0005739">
    <property type="term" value="C:mitochondrion"/>
    <property type="evidence" value="ECO:0000318"/>
    <property type="project" value="GO_Central"/>
</dbReference>
<dbReference type="GO" id="GO:0005634">
    <property type="term" value="C:nucleus"/>
    <property type="evidence" value="ECO:0000250"/>
    <property type="project" value="UniProtKB"/>
</dbReference>
<dbReference type="GO" id="GO:0005886">
    <property type="term" value="C:plasma membrane"/>
    <property type="evidence" value="ECO:0007669"/>
    <property type="project" value="UniProtKB-SubCell"/>
</dbReference>
<dbReference type="GO" id="GO:0005509">
    <property type="term" value="F:calcium ion binding"/>
    <property type="evidence" value="ECO:0000250"/>
    <property type="project" value="UniProtKB"/>
</dbReference>
<dbReference type="GO" id="GO:0005525">
    <property type="term" value="F:GTP binding"/>
    <property type="evidence" value="ECO:0000250"/>
    <property type="project" value="UniProtKB"/>
</dbReference>
<dbReference type="GO" id="GO:0120297">
    <property type="term" value="F:histone dopaminyltransferase activity"/>
    <property type="evidence" value="ECO:0000250"/>
    <property type="project" value="UniProtKB"/>
</dbReference>
<dbReference type="GO" id="GO:0120295">
    <property type="term" value="F:histone serotonyltransferase activity"/>
    <property type="evidence" value="ECO:0000250"/>
    <property type="project" value="UniProtKB"/>
</dbReference>
<dbReference type="GO" id="GO:0008233">
    <property type="term" value="F:peptidase activity"/>
    <property type="evidence" value="ECO:0007669"/>
    <property type="project" value="UniProtKB-KW"/>
</dbReference>
<dbReference type="GO" id="GO:0120299">
    <property type="term" value="F:peptide histaminyltransferase activity"/>
    <property type="evidence" value="ECO:0000250"/>
    <property type="project" value="UniProtKB"/>
</dbReference>
<dbReference type="GO" id="GO:0120298">
    <property type="term" value="F:peptide noradrenalinyltransferase activity"/>
    <property type="evidence" value="ECO:0007669"/>
    <property type="project" value="RHEA"/>
</dbReference>
<dbReference type="GO" id="GO:0003810">
    <property type="term" value="F:protein-glutamine gamma-glutamyltransferase activity"/>
    <property type="evidence" value="ECO:0000318"/>
    <property type="project" value="GO_Central"/>
</dbReference>
<dbReference type="GO" id="GO:0050568">
    <property type="term" value="F:protein-glutamine glutaminase activity"/>
    <property type="evidence" value="ECO:0000250"/>
    <property type="project" value="UniProtKB"/>
</dbReference>
<dbReference type="GO" id="GO:0060348">
    <property type="term" value="P:bone development"/>
    <property type="evidence" value="ECO:0000250"/>
    <property type="project" value="UniProtKB"/>
</dbReference>
<dbReference type="GO" id="GO:1903351">
    <property type="term" value="P:cellular response to dopamine"/>
    <property type="evidence" value="ECO:0000250"/>
    <property type="project" value="UniProtKB"/>
</dbReference>
<dbReference type="GO" id="GO:1904015">
    <property type="term" value="P:cellular response to serotonin"/>
    <property type="evidence" value="ECO:0000250"/>
    <property type="project" value="UniProtKB"/>
</dbReference>
<dbReference type="GO" id="GO:0018149">
    <property type="term" value="P:peptide cross-linking"/>
    <property type="evidence" value="ECO:0000250"/>
    <property type="project" value="UniProtKB"/>
</dbReference>
<dbReference type="GO" id="GO:0007200">
    <property type="term" value="P:phospholipase C-activating G protein-coupled receptor signaling pathway"/>
    <property type="evidence" value="ECO:0000250"/>
    <property type="project" value="UniProtKB"/>
</dbReference>
<dbReference type="GO" id="GO:0043065">
    <property type="term" value="P:positive regulation of apoptotic process"/>
    <property type="evidence" value="ECO:0000250"/>
    <property type="project" value="UniProtKB"/>
</dbReference>
<dbReference type="GO" id="GO:0043547">
    <property type="term" value="P:positive regulation of GTPase activity"/>
    <property type="evidence" value="ECO:0000250"/>
    <property type="project" value="UniProtKB"/>
</dbReference>
<dbReference type="GO" id="GO:0051057">
    <property type="term" value="P:positive regulation of small GTPase mediated signal transduction"/>
    <property type="evidence" value="ECO:0000250"/>
    <property type="project" value="UniProtKB"/>
</dbReference>
<dbReference type="GO" id="GO:0018277">
    <property type="term" value="P:protein deamination"/>
    <property type="evidence" value="ECO:0000250"/>
    <property type="project" value="UniProtKB"/>
</dbReference>
<dbReference type="GO" id="GO:0051260">
    <property type="term" value="P:protein homooligomerization"/>
    <property type="evidence" value="ECO:0000250"/>
    <property type="project" value="UniProtKB"/>
</dbReference>
<dbReference type="GO" id="GO:0006508">
    <property type="term" value="P:proteolysis"/>
    <property type="evidence" value="ECO:0007669"/>
    <property type="project" value="UniProtKB-KW"/>
</dbReference>
<dbReference type="GO" id="GO:2000425">
    <property type="term" value="P:regulation of apoptotic cell clearance"/>
    <property type="evidence" value="ECO:0000250"/>
    <property type="project" value="UniProtKB"/>
</dbReference>
<dbReference type="GO" id="GO:0042981">
    <property type="term" value="P:regulation of apoptotic process"/>
    <property type="evidence" value="ECO:0000250"/>
    <property type="project" value="UniProtKB"/>
</dbReference>
<dbReference type="FunFam" id="2.60.40.10:FF:000090">
    <property type="entry name" value="Protein-glutamine gamma-glutamyltransferase 2"/>
    <property type="match status" value="1"/>
</dbReference>
<dbReference type="FunFam" id="2.60.40.10:FF:000278">
    <property type="entry name" value="Protein-glutamine gamma-glutamyltransferase 2"/>
    <property type="match status" value="1"/>
</dbReference>
<dbReference type="FunFam" id="2.60.40.10:FF:001042">
    <property type="entry name" value="Protein-glutamine gamma-glutamyltransferase 2"/>
    <property type="match status" value="1"/>
</dbReference>
<dbReference type="FunFam" id="3.90.260.10:FF:000001">
    <property type="entry name" value="Protein-glutamine gamma-glutamyltransferase 2"/>
    <property type="match status" value="1"/>
</dbReference>
<dbReference type="Gene3D" id="2.60.40.10">
    <property type="entry name" value="Immunoglobulins"/>
    <property type="match status" value="3"/>
</dbReference>
<dbReference type="Gene3D" id="3.90.260.10">
    <property type="entry name" value="Transglutaminase-like"/>
    <property type="match status" value="1"/>
</dbReference>
<dbReference type="InterPro" id="IPR013783">
    <property type="entry name" value="Ig-like_fold"/>
</dbReference>
<dbReference type="InterPro" id="IPR014756">
    <property type="entry name" value="Ig_E-set"/>
</dbReference>
<dbReference type="InterPro" id="IPR038765">
    <property type="entry name" value="Papain-like_cys_pep_sf"/>
</dbReference>
<dbReference type="InterPro" id="IPR050779">
    <property type="entry name" value="Transglutaminase"/>
</dbReference>
<dbReference type="InterPro" id="IPR002931">
    <property type="entry name" value="Transglutaminase-like"/>
</dbReference>
<dbReference type="InterPro" id="IPR036985">
    <property type="entry name" value="Transglutaminase-like_sf"/>
</dbReference>
<dbReference type="InterPro" id="IPR023608">
    <property type="entry name" value="Transglutaminase_animal"/>
</dbReference>
<dbReference type="InterPro" id="IPR013808">
    <property type="entry name" value="Transglutaminase_AS"/>
</dbReference>
<dbReference type="InterPro" id="IPR008958">
    <property type="entry name" value="Transglutaminase_C"/>
</dbReference>
<dbReference type="InterPro" id="IPR036238">
    <property type="entry name" value="Transglutaminase_C_sf"/>
</dbReference>
<dbReference type="InterPro" id="IPR001102">
    <property type="entry name" value="Transglutaminase_N"/>
</dbReference>
<dbReference type="PANTHER" id="PTHR11590">
    <property type="entry name" value="PROTEIN-GLUTAMINE GAMMA-GLUTAMYLTRANSFERASE"/>
    <property type="match status" value="1"/>
</dbReference>
<dbReference type="PANTHER" id="PTHR11590:SF6">
    <property type="entry name" value="PROTEIN-GLUTAMINE GAMMA-GLUTAMYLTRANSFERASE 2"/>
    <property type="match status" value="1"/>
</dbReference>
<dbReference type="Pfam" id="PF00927">
    <property type="entry name" value="Transglut_C"/>
    <property type="match status" value="2"/>
</dbReference>
<dbReference type="Pfam" id="PF01841">
    <property type="entry name" value="Transglut_core"/>
    <property type="match status" value="1"/>
</dbReference>
<dbReference type="Pfam" id="PF00868">
    <property type="entry name" value="Transglut_N"/>
    <property type="match status" value="1"/>
</dbReference>
<dbReference type="PIRSF" id="PIRSF000459">
    <property type="entry name" value="TGM_EBP42"/>
    <property type="match status" value="1"/>
</dbReference>
<dbReference type="SMART" id="SM00460">
    <property type="entry name" value="TGc"/>
    <property type="match status" value="1"/>
</dbReference>
<dbReference type="SUPFAM" id="SSF54001">
    <property type="entry name" value="Cysteine proteinases"/>
    <property type="match status" value="1"/>
</dbReference>
<dbReference type="SUPFAM" id="SSF81296">
    <property type="entry name" value="E set domains"/>
    <property type="match status" value="1"/>
</dbReference>
<dbReference type="SUPFAM" id="SSF49309">
    <property type="entry name" value="Transglutaminase, two C-terminal domains"/>
    <property type="match status" value="2"/>
</dbReference>
<dbReference type="PROSITE" id="PS00547">
    <property type="entry name" value="TRANSGLUTAMINASES"/>
    <property type="match status" value="1"/>
</dbReference>
<comment type="function">
    <text evidence="2 3">Calcium-dependent acyltransferase that catalyzes the formation of covalent bonds between peptide-bound glutamine and various primary amines, such as gamma-amino group of peptide-bound lysine, or mono- and polyamines, thereby producing cross-linked or aminated proteins, respectively. Involved in many biological processes, such as bone development, angiogenesis, wound healing, cellular differentiation, chromatin modification and apoptosis. Acts as a protein-glutamine gamma-glutamyltransferase by mediating the cross-linking of proteins: under physiological conditions, the protein cross-linking activity is inhibited by GTP; inhibition is relieved by Ca(2+) in response to various stresses. When secreted, catalyzes cross-linking of proteins of the extracellular matrix, resulting in the formation of scaffolds. Plays a key role during apoptosis, both by (1) promoting the cross-linking of cytoskeletal proteins resulting in condensation of the cytoplasm, and by (2) mediating cross-linking proteins of the extracellular matrix, resulting in the irreversible formation of scaffolds that stabilize the integrity of the dying cells before their clearance by phagocytosis, thereby preventing the leakage of harmful intracellular components. In addition to protein cross-linking, can use different monoamine substrates to catalyze a vast array of protein post-translational modifications: mediates aminylation of serotonin, dopamine, noradrenaline or histamine into glutamine residues of target proteins to generate protein serotonylation, dopaminylation, noradrenalinylation or histaminylation, respectively (By similarity). Mediates protein serotonylation of small GTPases during activation and aggregation of platelets, leading to constitutive activation of these GTPases (By similarity). Plays a key role in chromatin organization by mediating serotonylation and dopaminylation of histone H3. Catalyzes serotonylation of 'Gln-5' of histone H3 (H3Q5ser) during serotonergic neuron differentiation, thereby facilitating transcription. Acts as a mediator of neurotransmission-independent role of nuclear dopamine in ventral tegmental area (VTA) neurons: catalyzes dopaminylation of 'Gln-5' of histone H3 (H3Q5dop), thereby regulating relapse-related transcriptional plasticity in the reward system (By similarity). Also acts as a protein deamidase by mediating the side chain deamidation of specific glutamine residues of proteins to glutamate. May also act as an isopeptidase cleaving the previously formed cross-links. Also able to participate in signaling pathways independently of its acyltransferase activity: acts as a signal transducer in alpha-1 adrenergic receptor-mediated stimulation of phospholipase C-delta (PLCD) activity and is required for coupling alpha-1 adrenergic agonists to the stimulation of phosphoinositide lipid metabolism (By similarity).</text>
</comment>
<comment type="catalytic activity">
    <reaction evidence="3 6">
        <text>L-glutaminyl-[protein] + L-lysyl-[protein] = [protein]-L-lysyl-N(6)-5-L-glutamyl-[protein] + NH4(+)</text>
        <dbReference type="Rhea" id="RHEA:54816"/>
        <dbReference type="Rhea" id="RHEA-COMP:9752"/>
        <dbReference type="Rhea" id="RHEA-COMP:10207"/>
        <dbReference type="Rhea" id="RHEA-COMP:14005"/>
        <dbReference type="ChEBI" id="CHEBI:28938"/>
        <dbReference type="ChEBI" id="CHEBI:29969"/>
        <dbReference type="ChEBI" id="CHEBI:30011"/>
        <dbReference type="ChEBI" id="CHEBI:138370"/>
        <dbReference type="EC" id="2.3.2.13"/>
    </reaction>
    <physiologicalReaction direction="left-to-right" evidence="3">
        <dbReference type="Rhea" id="RHEA:54817"/>
    </physiologicalReaction>
</comment>
<comment type="catalytic activity">
    <reaction evidence="3">
        <text>L-glutaminyl-[protein] + serotonin = 5-serotonyl-L-glutamyl-[protein] + NH4(+)</text>
        <dbReference type="Rhea" id="RHEA:66552"/>
        <dbReference type="Rhea" id="RHEA-COMP:10207"/>
        <dbReference type="Rhea" id="RHEA-COMP:17052"/>
        <dbReference type="ChEBI" id="CHEBI:28938"/>
        <dbReference type="ChEBI" id="CHEBI:30011"/>
        <dbReference type="ChEBI" id="CHEBI:167174"/>
        <dbReference type="ChEBI" id="CHEBI:350546"/>
    </reaction>
    <physiologicalReaction direction="left-to-right" evidence="3">
        <dbReference type="Rhea" id="RHEA:66553"/>
    </physiologicalReaction>
</comment>
<comment type="catalytic activity">
    <reaction evidence="3">
        <text>L-glutaminyl-[protein] + dopamine = 5-dopaminyl-L-glutamyl-[protein] + NH4(+)</text>
        <dbReference type="Rhea" id="RHEA:66556"/>
        <dbReference type="Rhea" id="RHEA-COMP:10207"/>
        <dbReference type="Rhea" id="RHEA-COMP:17053"/>
        <dbReference type="ChEBI" id="CHEBI:28938"/>
        <dbReference type="ChEBI" id="CHEBI:30011"/>
        <dbReference type="ChEBI" id="CHEBI:59905"/>
        <dbReference type="ChEBI" id="CHEBI:167175"/>
    </reaction>
    <physiologicalReaction direction="left-to-right" evidence="3">
        <dbReference type="Rhea" id="RHEA:66557"/>
    </physiologicalReaction>
</comment>
<comment type="catalytic activity">
    <reaction evidence="3">
        <text>L-glutaminyl-[protein] + histamine = 5-histaminyl-L-glutamyl-[protein] + NH4(+)</text>
        <dbReference type="Rhea" id="RHEA:66564"/>
        <dbReference type="Rhea" id="RHEA-COMP:10207"/>
        <dbReference type="Rhea" id="RHEA-COMP:17056"/>
        <dbReference type="ChEBI" id="CHEBI:28938"/>
        <dbReference type="ChEBI" id="CHEBI:30011"/>
        <dbReference type="ChEBI" id="CHEBI:58432"/>
        <dbReference type="ChEBI" id="CHEBI:167179"/>
    </reaction>
    <physiologicalReaction direction="left-to-right" evidence="3">
        <dbReference type="Rhea" id="RHEA:66565"/>
    </physiologicalReaction>
</comment>
<comment type="catalytic activity">
    <reaction evidence="2">
        <text>L-glutaminyl-[protein] + (R)-noradrenaline = 5-(R)-noradrenalinyl-L-glutamyl-[protein] + NH4(+)</text>
        <dbReference type="Rhea" id="RHEA:66560"/>
        <dbReference type="Rhea" id="RHEA-COMP:10207"/>
        <dbReference type="Rhea" id="RHEA-COMP:17054"/>
        <dbReference type="ChEBI" id="CHEBI:28938"/>
        <dbReference type="ChEBI" id="CHEBI:30011"/>
        <dbReference type="ChEBI" id="CHEBI:72587"/>
        <dbReference type="ChEBI" id="CHEBI:167178"/>
    </reaction>
    <physiologicalReaction direction="left-to-right" evidence="2">
        <dbReference type="Rhea" id="RHEA:66561"/>
    </physiologicalReaction>
</comment>
<comment type="catalytic activity">
    <reaction evidence="3">
        <text>L-glutaminyl-[protein] + H2O = L-glutamyl-[protein] + NH4(+)</text>
        <dbReference type="Rhea" id="RHEA:16441"/>
        <dbReference type="Rhea" id="RHEA-COMP:10207"/>
        <dbReference type="Rhea" id="RHEA-COMP:10208"/>
        <dbReference type="ChEBI" id="CHEBI:15377"/>
        <dbReference type="ChEBI" id="CHEBI:28938"/>
        <dbReference type="ChEBI" id="CHEBI:29973"/>
        <dbReference type="ChEBI" id="CHEBI:30011"/>
        <dbReference type="EC" id="3.5.1.44"/>
    </reaction>
    <physiologicalReaction direction="left-to-right" evidence="3">
        <dbReference type="Rhea" id="RHEA:16442"/>
    </physiologicalReaction>
</comment>
<comment type="cofactor">
    <cofactor evidence="3">
        <name>Ca(2+)</name>
        <dbReference type="ChEBI" id="CHEBI:29108"/>
    </cofactor>
</comment>
<comment type="activity regulation">
    <text evidence="3">Acyltransferase activity is regulated by the binding of GTP and Ca(2+): inactivated by GTP, which stabilizes its closed structure, thereby obstructing the accessibility of substrates to the active sites. In contrast, Ca(2+) acts as a cofactor by inducing conformational change to the active open form. In absence of Ca(2+), Mg(2+) may bind Ca(2+)-binding sites, promoting GTP-binding and subsequent inhibition of the acyltransferase activity.</text>
</comment>
<comment type="subunit">
    <text evidence="3">Monomer.</text>
</comment>
<comment type="subcellular location">
    <subcellularLocation>
        <location evidence="3">Cytoplasm</location>
        <location evidence="3">Cytosol</location>
    </subcellularLocation>
    <subcellularLocation>
        <location evidence="3">Nucleus</location>
    </subcellularLocation>
    <subcellularLocation>
        <location evidence="3">Chromosome</location>
    </subcellularLocation>
    <subcellularLocation>
        <location evidence="3">Secreted</location>
        <location evidence="3">Extracellular space</location>
        <location evidence="3">Extracellular matrix</location>
    </subcellularLocation>
    <subcellularLocation>
        <location evidence="5">Cell membrane</location>
    </subcellularLocation>
    <subcellularLocation>
        <location evidence="3">Mitochondrion</location>
    </subcellularLocation>
    <text evidence="3">Mainly localizes to the cytosol. Present at much lower level in the nucleus and chromatin. Also secreted via a non-classical secretion pathway to the extracellular matrix.</text>
</comment>
<comment type="tissue specificity">
    <text evidence="8">Predominates in mature erythrocytes. Also found in kidney and cardiac muscle.</text>
</comment>
<comment type="similarity">
    <text evidence="10">Belongs to the transglutaminase superfamily. Transglutaminase family.</text>
</comment>
<comment type="sequence caution" evidence="10">
    <conflict type="erroneous initiation">
        <sequence resource="EMBL-CDS" id="AAA49104"/>
    </conflict>
    <text>Extended N-terminus.</text>
</comment>
<keyword id="KW-0012">Acyltransferase</keyword>
<keyword id="KW-0106">Calcium</keyword>
<keyword id="KW-1003">Cell membrane</keyword>
<keyword id="KW-0158">Chromosome</keyword>
<keyword id="KW-0963">Cytoplasm</keyword>
<keyword id="KW-0903">Direct protein sequencing</keyword>
<keyword id="KW-0272">Extracellular matrix</keyword>
<keyword id="KW-0342">GTP-binding</keyword>
<keyword id="KW-0378">Hydrolase</keyword>
<keyword id="KW-0472">Membrane</keyword>
<keyword id="KW-0479">Metal-binding</keyword>
<keyword id="KW-0496">Mitochondrion</keyword>
<keyword id="KW-0547">Nucleotide-binding</keyword>
<keyword id="KW-0539">Nucleus</keyword>
<keyword id="KW-0645">Protease</keyword>
<keyword id="KW-1185">Reference proteome</keyword>
<keyword id="KW-0964">Secreted</keyword>
<keyword id="KW-0808">Transferase</keyword>
<protein>
    <recommendedName>
        <fullName evidence="10">Protein-glutamine gamma-glutamyltransferase 2</fullName>
        <ecNumber evidence="3">2.3.2.13</ecNumber>
    </recommendedName>
    <alternativeName>
        <fullName evidence="9">Erythrocyte transglutaminase</fullName>
    </alternativeName>
    <alternativeName>
        <fullName evidence="10">Isopeptidase TGM2</fullName>
        <ecNumber evidence="3">3.4.-.-</ecNumber>
    </alternativeName>
    <alternativeName>
        <fullName evidence="10">Protein-glutamine deamidase TGM2</fullName>
        <ecNumber evidence="3">3.5.1.44</ecNumber>
    </alternativeName>
    <alternativeName>
        <fullName evidence="10">Protein-glutamine dopaminyltransferase TGM2</fullName>
        <ecNumber evidence="3">2.3.1.-</ecNumber>
    </alternativeName>
    <alternativeName>
        <fullName evidence="10">Protein-glutamine histaminyltransferase TGM2</fullName>
        <ecNumber evidence="3">2.3.1.-</ecNumber>
    </alternativeName>
    <alternativeName>
        <fullName evidence="10">Protein-glutamine noradrenalinyltransferase TGM2</fullName>
        <ecNumber evidence="2">2.3.1.-</ecNumber>
    </alternativeName>
    <alternativeName>
        <fullName evidence="10">Protein-glutamine serotonyltransferase TGM2</fullName>
        <ecNumber evidence="3">2.3.1.-</ecNumber>
    </alternativeName>
    <alternativeName>
        <fullName evidence="3">Tissue transglutaminase</fullName>
    </alternativeName>
    <alternativeName>
        <fullName evidence="3">Transglutaminase-2</fullName>
        <shortName evidence="3">TGase-2</shortName>
    </alternativeName>
</protein>
<proteinExistence type="evidence at protein level"/>
<accession>Q01841</accession>
<sequence>MAEELVLETCDLQCERNGREHRTEEMGSQQLVVRRGQPFTITLNFAGRGYEEGVDKLAFDVETGPCPVETSGTRSHFTLTDCPEEGTWSAVLQQQDGATLCVSLCSPSIARVGRYRLTLEASTGYQGSSFHLGDFVLLFNAWHPEDAVYLKEEDERREYVLSQQGLIYMGSRDYITSTPWNFGQFEDEILAICLEMLDINPKFLRDQNLDCSRRNDPVYIGRVVSAMVNCNDEDHGVLLGRWDNHYEDGMSPMAWIGSVDILKRWRRLGCQPVKYGQCWVFAAVACTVMRCLGVPSRVVTNYNSAHDTNGNLVIDRYLSETGMEERRSTDMIWNFHCWVECWMTRPDLAPGYDGWQALDPTPQEKSEGVYCCGPAPVKAIKEGDLQVQYDIPFVFAEVNADVVYWIVQSDGEKKKSTHSSVVGKNISTKSVGRDSREDITHTYKYPEGSEKEREVFSKAEHEKSSLGEQEEGLHMRIKLSEGANNGSDFDVFAFISNDTDKERECRLRLCARTASYNGEVGPQCGFKDLLNLSLQPHMEQSVPLRILYEQYGPNLTQDNMIKVVALLTEYETGDSVVAIRDVYIQNPEIKIRILGEPMQERKLVAEIRLVNPLAEPLNNCIFVVEGAGLTEGQRIEELEDPVEPQAEAKFRMEFVPRQAGLHKLMVDFESDKLTGVKGYRNVIIAPLPK</sequence>
<gene>
    <name evidence="3" type="primary">TGM2</name>
</gene>
<name>TGM2_CHICK</name>
<feature type="chain" id="PRO_0000213709" description="Protein-glutamine gamma-glutamyltransferase 2">
    <location>
        <begin position="1"/>
        <end position="689"/>
    </location>
</feature>
<feature type="region of interest" description="Disordered" evidence="7">
    <location>
        <begin position="427"/>
        <end position="453"/>
    </location>
</feature>
<feature type="compositionally biased region" description="Basic and acidic residues" evidence="7">
    <location>
        <begin position="431"/>
        <end position="441"/>
    </location>
</feature>
<feature type="active site" evidence="6">
    <location>
        <position position="278"/>
    </location>
</feature>
<feature type="active site" evidence="6">
    <location>
        <position position="336"/>
    </location>
</feature>
<feature type="active site" evidence="6">
    <location>
        <position position="359"/>
    </location>
</feature>
<feature type="binding site" evidence="1">
    <location>
        <position position="399"/>
    </location>
    <ligand>
        <name>Ca(2+)</name>
        <dbReference type="ChEBI" id="CHEBI:29108"/>
    </ligand>
</feature>
<feature type="binding site" evidence="1">
    <location>
        <position position="401"/>
    </location>
    <ligand>
        <name>Ca(2+)</name>
        <dbReference type="ChEBI" id="CHEBI:29108"/>
    </ligand>
</feature>
<feature type="binding site" evidence="3">
    <location>
        <position position="437"/>
    </location>
    <ligand>
        <name>Ca(2+)</name>
        <dbReference type="ChEBI" id="CHEBI:29108"/>
    </ligand>
</feature>
<feature type="binding site" evidence="1">
    <location>
        <position position="447"/>
    </location>
    <ligand>
        <name>Ca(2+)</name>
        <dbReference type="ChEBI" id="CHEBI:29108"/>
    </ligand>
</feature>
<feature type="binding site" evidence="1">
    <location>
        <position position="452"/>
    </location>
    <ligand>
        <name>Ca(2+)</name>
        <dbReference type="ChEBI" id="CHEBI:29108"/>
    </ligand>
</feature>
<feature type="binding site" evidence="3">
    <location>
        <begin position="476"/>
        <end position="483"/>
    </location>
    <ligand>
        <name>GTP</name>
        <dbReference type="ChEBI" id="CHEBI:37565"/>
    </ligand>
</feature>
<feature type="binding site" evidence="3">
    <location>
        <position position="539"/>
    </location>
    <ligand>
        <name>Ca(2+)</name>
        <dbReference type="ChEBI" id="CHEBI:29108"/>
    </ligand>
</feature>
<feature type="binding site" evidence="3">
    <location>
        <begin position="580"/>
        <end position="583"/>
    </location>
    <ligand>
        <name>GTP</name>
        <dbReference type="ChEBI" id="CHEBI:37565"/>
    </ligand>
</feature>
<feature type="site" description="Important for catalytic activity" evidence="4">
    <location>
        <position position="516"/>
    </location>
</feature>
<reference key="1">
    <citation type="journal article" date="1992" name="Proc. Natl. Acad. Sci. U.S.A.">
        <title>Cloning and expression of chicken erythrocyte transglutaminase.</title>
        <authorList>
            <person name="Weraarchakul-Boonmark N."/>
            <person name="Jeong J.M."/>
            <person name="Murthy S.N.P."/>
            <person name="Engel J.D."/>
            <person name="Lorand L."/>
        </authorList>
    </citation>
    <scope>NUCLEOTIDE SEQUENCE [MRNA]</scope>
    <scope>PROTEIN SEQUENCE OF 9-22; 181-191; 242-262; 383-401; 406-416; 430-448 AND 457-483</scope>
    <source>
        <tissue>Erythrocyte</tissue>
    </source>
</reference>
<evidence type="ECO:0000250" key="1">
    <source>
        <dbReference type="UniProtKB" id="P00488"/>
    </source>
</evidence>
<evidence type="ECO:0000250" key="2">
    <source>
        <dbReference type="UniProtKB" id="P08587"/>
    </source>
</evidence>
<evidence type="ECO:0000250" key="3">
    <source>
        <dbReference type="UniProtKB" id="P21980"/>
    </source>
</evidence>
<evidence type="ECO:0000250" key="4">
    <source>
        <dbReference type="UniProtKB" id="P52181"/>
    </source>
</evidence>
<evidence type="ECO:0000250" key="5">
    <source>
        <dbReference type="UniProtKB" id="Q9WVJ6"/>
    </source>
</evidence>
<evidence type="ECO:0000255" key="6">
    <source>
        <dbReference type="PROSITE-ProRule" id="PRU10024"/>
    </source>
</evidence>
<evidence type="ECO:0000256" key="7">
    <source>
        <dbReference type="SAM" id="MobiDB-lite"/>
    </source>
</evidence>
<evidence type="ECO:0000269" key="8">
    <source>
    </source>
</evidence>
<evidence type="ECO:0000303" key="9">
    <source>
    </source>
</evidence>
<evidence type="ECO:0000305" key="10"/>